<name>YOR22_YEAST</name>
<dbReference type="EC" id="3.1.1.-"/>
<dbReference type="EMBL" id="X87331">
    <property type="protein sequence ID" value="CAA60771.1"/>
    <property type="molecule type" value="Genomic_DNA"/>
</dbReference>
<dbReference type="EMBL" id="Z74930">
    <property type="protein sequence ID" value="CAA99212.1"/>
    <property type="molecule type" value="Genomic_DNA"/>
</dbReference>
<dbReference type="EMBL" id="BK006948">
    <property type="protein sequence ID" value="DAA10805.1"/>
    <property type="molecule type" value="Genomic_DNA"/>
</dbReference>
<dbReference type="PIR" id="S54628">
    <property type="entry name" value="S54628"/>
</dbReference>
<dbReference type="BioGRID" id="34426">
    <property type="interactions" value="65"/>
</dbReference>
<dbReference type="FunCoup" id="Q12204">
    <property type="interactions" value="3"/>
</dbReference>
<dbReference type="IntAct" id="Q12204">
    <property type="interactions" value="3"/>
</dbReference>
<dbReference type="STRING" id="4932.YOR022C"/>
<dbReference type="iPTMnet" id="Q12204"/>
<dbReference type="PaxDb" id="4932-YOR022C"/>
<dbReference type="PeptideAtlas" id="Q12204"/>
<dbReference type="EnsemblFungi" id="YOR022C_mRNA">
    <property type="protein sequence ID" value="YOR022C"/>
    <property type="gene ID" value="YOR022C"/>
</dbReference>
<dbReference type="KEGG" id="sce:YOR022C"/>
<dbReference type="AGR" id="SGD:S000005548"/>
<dbReference type="SGD" id="S000005548">
    <property type="gene designation" value="YOR022C"/>
</dbReference>
<dbReference type="VEuPathDB" id="FungiDB:YOR022C"/>
<dbReference type="eggNOG" id="KOG2308">
    <property type="taxonomic scope" value="Eukaryota"/>
</dbReference>
<dbReference type="GeneTree" id="ENSGT00940000169275"/>
<dbReference type="HOGENOM" id="CLU_007365_0_0_1"/>
<dbReference type="InParanoid" id="Q12204"/>
<dbReference type="OMA" id="HIQRGYS"/>
<dbReference type="OrthoDB" id="69269at2759"/>
<dbReference type="BioCyc" id="YEAST:G3O-33570-MONOMER"/>
<dbReference type="Reactome" id="R-SCE-1483166">
    <property type="pathway name" value="Synthesis of PA"/>
</dbReference>
<dbReference type="Reactome" id="R-SCE-1483226">
    <property type="pathway name" value="Synthesis of PI"/>
</dbReference>
<dbReference type="Reactome" id="R-SCE-204005">
    <property type="pathway name" value="COPII-mediated vesicle transport"/>
</dbReference>
<dbReference type="BioGRID-ORCS" id="854187">
    <property type="hits" value="4 hits in 10 CRISPR screens"/>
</dbReference>
<dbReference type="PRO" id="PR:Q12204"/>
<dbReference type="Proteomes" id="UP000002311">
    <property type="component" value="Chromosome XV"/>
</dbReference>
<dbReference type="RNAct" id="Q12204">
    <property type="molecule type" value="protein"/>
</dbReference>
<dbReference type="GO" id="GO:0005737">
    <property type="term" value="C:cytoplasm"/>
    <property type="evidence" value="ECO:0000318"/>
    <property type="project" value="GO_Central"/>
</dbReference>
<dbReference type="GO" id="GO:0005759">
    <property type="term" value="C:mitochondrial matrix"/>
    <property type="evidence" value="ECO:0000314"/>
    <property type="project" value="CACAO"/>
</dbReference>
<dbReference type="GO" id="GO:0005739">
    <property type="term" value="C:mitochondrion"/>
    <property type="evidence" value="ECO:0007005"/>
    <property type="project" value="SGD"/>
</dbReference>
<dbReference type="GO" id="GO:0046872">
    <property type="term" value="F:metal ion binding"/>
    <property type="evidence" value="ECO:0007669"/>
    <property type="project" value="InterPro"/>
</dbReference>
<dbReference type="GO" id="GO:0008970">
    <property type="term" value="F:phospholipase A1 activity"/>
    <property type="evidence" value="ECO:0000314"/>
    <property type="project" value="CACAO"/>
</dbReference>
<dbReference type="GO" id="GO:0004620">
    <property type="term" value="F:phospholipase activity"/>
    <property type="evidence" value="ECO:0000314"/>
    <property type="project" value="SGD"/>
</dbReference>
<dbReference type="GO" id="GO:0032048">
    <property type="term" value="P:cardiolipin metabolic process"/>
    <property type="evidence" value="ECO:0000315"/>
    <property type="project" value="SGD"/>
</dbReference>
<dbReference type="GO" id="GO:0016042">
    <property type="term" value="P:lipid catabolic process"/>
    <property type="evidence" value="ECO:0007669"/>
    <property type="project" value="UniProtKB-KW"/>
</dbReference>
<dbReference type="GO" id="GO:0046337">
    <property type="term" value="P:phosphatidylethanolamine metabolic process"/>
    <property type="evidence" value="ECO:0000315"/>
    <property type="project" value="SGD"/>
</dbReference>
<dbReference type="GO" id="GO:0006644">
    <property type="term" value="P:phospholipid metabolic process"/>
    <property type="evidence" value="ECO:0000315"/>
    <property type="project" value="SGD"/>
</dbReference>
<dbReference type="Gene3D" id="3.40.50.1820">
    <property type="entry name" value="alpha/beta hydrolase"/>
    <property type="match status" value="1"/>
</dbReference>
<dbReference type="InterPro" id="IPR029058">
    <property type="entry name" value="AB_hydrolase_fold"/>
</dbReference>
<dbReference type="InterPro" id="IPR004177">
    <property type="entry name" value="DDHD_dom"/>
</dbReference>
<dbReference type="InterPro" id="IPR055555">
    <property type="entry name" value="PA-PLA1_DUF7131"/>
</dbReference>
<dbReference type="PANTHER" id="PTHR23509:SF10">
    <property type="entry name" value="LD21067P"/>
    <property type="match status" value="1"/>
</dbReference>
<dbReference type="PANTHER" id="PTHR23509">
    <property type="entry name" value="PA-PL1 PHOSPHOLIPASE FAMILY"/>
    <property type="match status" value="1"/>
</dbReference>
<dbReference type="Pfam" id="PF02862">
    <property type="entry name" value="DDHD"/>
    <property type="match status" value="2"/>
</dbReference>
<dbReference type="Pfam" id="PF23465">
    <property type="entry name" value="DUF7131"/>
    <property type="match status" value="1"/>
</dbReference>
<dbReference type="Pfam" id="PF23463">
    <property type="entry name" value="WWE_2"/>
    <property type="match status" value="1"/>
</dbReference>
<dbReference type="SMART" id="SM01127">
    <property type="entry name" value="DDHD"/>
    <property type="match status" value="1"/>
</dbReference>
<dbReference type="SUPFAM" id="SSF53474">
    <property type="entry name" value="alpha/beta-Hydrolases"/>
    <property type="match status" value="1"/>
</dbReference>
<dbReference type="PROSITE" id="PS51043">
    <property type="entry name" value="DDHD"/>
    <property type="match status" value="1"/>
</dbReference>
<dbReference type="PROSITE" id="PS00120">
    <property type="entry name" value="LIPASE_SER"/>
    <property type="match status" value="1"/>
</dbReference>
<organism>
    <name type="scientific">Saccharomyces cerevisiae (strain ATCC 204508 / S288c)</name>
    <name type="common">Baker's yeast</name>
    <dbReference type="NCBI Taxonomy" id="559292"/>
    <lineage>
        <taxon>Eukaryota</taxon>
        <taxon>Fungi</taxon>
        <taxon>Dikarya</taxon>
        <taxon>Ascomycota</taxon>
        <taxon>Saccharomycotina</taxon>
        <taxon>Saccharomycetes</taxon>
        <taxon>Saccharomycetales</taxon>
        <taxon>Saccharomycetaceae</taxon>
        <taxon>Saccharomyces</taxon>
    </lineage>
</organism>
<sequence>MLRFTHRGLPSSTRFRNIFVRLNHIYVPWFYAIDVPNSKPYLPTYQTLHSPKKFKPFSVDDSNRLEKASKRQERRPVLVNEDYLFKVDLSHMELSPTYWEGPTYQVRRGVWFDSSNQPLSSDLTSEIEGLYKQLKFDDSNDDPTTTPPAESQDIFRLKGKYPVDKENEGEQKNGSSNKDENESTFKFILFANKQTAFLLSDLDGGKLQLAFLRSNLAQSLPINATMITRSYKYSSSATTKQTSTSFKAAKTPQTEVADGSNSSKSRSIETKLEKKVSNLFNLSDFLQLFNGNASKDQDDAQSLEKQMETDYNNADNSQGANASSKIEDGKNSGASDRQIRSNRRDVDNLILCVHGIGQTLGKKYEYVNFAHTVNLLRSNMKKIYNNSEKLQSLNTAPDYKSNCNVQVLPITWRHSISFQTDAKEENIENPDLPTLSQVTVNGVLPLRKLLADGLLDILLYVEPYYQDMILQQVTSQLNKTYRIFKEFNPEFDGKVHLVGHSLGSMILFDILSKQKKYELEFQVDNLFFIGSPIGLLKLIQRTKIGDRPEFPNDLERKLTVQRPQCKDIYNVYHVCDPISYRMEPLVSKEMAHYEQTYLPHCSEAYGLTSKVLEFGENIWKDLPGTDENNLQSKKTSPEKKEVKLSENLTRMLTGLNYTGRLDYAMSPSLLEVDFISAIKSHVSYFEEPDIAAFILKEILSKHENASEIYVKRKTG</sequence>
<protein>
    <recommendedName>
        <fullName>Probable phospholipase YOR022C, mitochondrial</fullName>
        <ecNumber>3.1.1.-</ecNumber>
    </recommendedName>
</protein>
<keyword id="KW-0378">Hydrolase</keyword>
<keyword id="KW-0442">Lipid degradation</keyword>
<keyword id="KW-0443">Lipid metabolism</keyword>
<keyword id="KW-0496">Mitochondrion</keyword>
<keyword id="KW-1185">Reference proteome</keyword>
<keyword id="KW-0809">Transit peptide</keyword>
<feature type="transit peptide" description="Mitochondrion" evidence="2">
    <location>
        <begin position="1"/>
        <end position="22"/>
    </location>
</feature>
<feature type="chain" id="PRO_0000237644" description="Probable phospholipase YOR022C, mitochondrial">
    <location>
        <begin position="23"/>
        <end position="715"/>
    </location>
</feature>
<feature type="domain" description="DDHD" evidence="3">
    <location>
        <begin position="519"/>
        <end position="700"/>
    </location>
</feature>
<feature type="region of interest" description="Disordered" evidence="4">
    <location>
        <begin position="161"/>
        <end position="180"/>
    </location>
</feature>
<feature type="region of interest" description="Disordered" evidence="4">
    <location>
        <begin position="242"/>
        <end position="268"/>
    </location>
</feature>
<feature type="region of interest" description="Disordered" evidence="4">
    <location>
        <begin position="311"/>
        <end position="340"/>
    </location>
</feature>
<feature type="compositionally biased region" description="Low complexity" evidence="4">
    <location>
        <begin position="242"/>
        <end position="251"/>
    </location>
</feature>
<feature type="compositionally biased region" description="Polar residues" evidence="4">
    <location>
        <begin position="311"/>
        <end position="324"/>
    </location>
</feature>
<feature type="active site" evidence="1">
    <location>
        <position position="501"/>
    </location>
</feature>
<evidence type="ECO:0000250" key="1"/>
<evidence type="ECO:0000255" key="2"/>
<evidence type="ECO:0000255" key="3">
    <source>
        <dbReference type="PROSITE-ProRule" id="PRU00378"/>
    </source>
</evidence>
<evidence type="ECO:0000256" key="4">
    <source>
        <dbReference type="SAM" id="MobiDB-lite"/>
    </source>
</evidence>
<evidence type="ECO:0000269" key="5">
    <source>
    </source>
</evidence>
<evidence type="ECO:0000269" key="6">
    <source>
    </source>
</evidence>
<evidence type="ECO:0000269" key="7">
    <source>
    </source>
</evidence>
<evidence type="ECO:0000305" key="8"/>
<comment type="function">
    <text evidence="1">Probable phospholipase that hydrolyzes phosphatidic acid.</text>
</comment>
<comment type="subcellular location">
    <subcellularLocation>
        <location evidence="5 7">Mitochondrion</location>
    </subcellularLocation>
</comment>
<comment type="miscellaneous">
    <text evidence="6">Present with 736 molecules/cell in log phase SD medium.</text>
</comment>
<comment type="similarity">
    <text evidence="8">Belongs to the PA-PLA1 family.</text>
</comment>
<reference key="1">
    <citation type="journal article" date="1997" name="Nature">
        <title>The nucleotide sequence of Saccharomyces cerevisiae chromosome XV.</title>
        <authorList>
            <person name="Dujon B."/>
            <person name="Albermann K."/>
            <person name="Aldea M."/>
            <person name="Alexandraki D."/>
            <person name="Ansorge W."/>
            <person name="Arino J."/>
            <person name="Benes V."/>
            <person name="Bohn C."/>
            <person name="Bolotin-Fukuhara M."/>
            <person name="Bordonne R."/>
            <person name="Boyer J."/>
            <person name="Camasses A."/>
            <person name="Casamayor A."/>
            <person name="Casas C."/>
            <person name="Cheret G."/>
            <person name="Cziepluch C."/>
            <person name="Daignan-Fornier B."/>
            <person name="Dang V.-D."/>
            <person name="de Haan M."/>
            <person name="Delius H."/>
            <person name="Durand P."/>
            <person name="Fairhead C."/>
            <person name="Feldmann H."/>
            <person name="Gaillon L."/>
            <person name="Galisson F."/>
            <person name="Gamo F.-J."/>
            <person name="Gancedo C."/>
            <person name="Goffeau A."/>
            <person name="Goulding S.E."/>
            <person name="Grivell L.A."/>
            <person name="Habbig B."/>
            <person name="Hand N.J."/>
            <person name="Hani J."/>
            <person name="Hattenhorst U."/>
            <person name="Hebling U."/>
            <person name="Hernando Y."/>
            <person name="Herrero E."/>
            <person name="Heumann K."/>
            <person name="Hiesel R."/>
            <person name="Hilger F."/>
            <person name="Hofmann B."/>
            <person name="Hollenberg C.P."/>
            <person name="Hughes B."/>
            <person name="Jauniaux J.-C."/>
            <person name="Kalogeropoulos A."/>
            <person name="Katsoulou C."/>
            <person name="Kordes E."/>
            <person name="Lafuente M.J."/>
            <person name="Landt O."/>
            <person name="Louis E.J."/>
            <person name="Maarse A.C."/>
            <person name="Madania A."/>
            <person name="Mannhaupt G."/>
            <person name="Marck C."/>
            <person name="Martin R.P."/>
            <person name="Mewes H.-W."/>
            <person name="Michaux G."/>
            <person name="Paces V."/>
            <person name="Parle-McDermott A.G."/>
            <person name="Pearson B.M."/>
            <person name="Perrin A."/>
            <person name="Pettersson B."/>
            <person name="Poch O."/>
            <person name="Pohl T.M."/>
            <person name="Poirey R."/>
            <person name="Portetelle D."/>
            <person name="Pujol A."/>
            <person name="Purnelle B."/>
            <person name="Ramezani Rad M."/>
            <person name="Rechmann S."/>
            <person name="Schwager C."/>
            <person name="Schweizer M."/>
            <person name="Sor F."/>
            <person name="Sterky F."/>
            <person name="Tarassov I.A."/>
            <person name="Teodoru C."/>
            <person name="Tettelin H."/>
            <person name="Thierry A."/>
            <person name="Tobiasch E."/>
            <person name="Tzermia M."/>
            <person name="Uhlen M."/>
            <person name="Unseld M."/>
            <person name="Valens M."/>
            <person name="Vandenbol M."/>
            <person name="Vetter I."/>
            <person name="Vlcek C."/>
            <person name="Voet M."/>
            <person name="Volckaert G."/>
            <person name="Voss H."/>
            <person name="Wambutt R."/>
            <person name="Wedler H."/>
            <person name="Wiemann S."/>
            <person name="Winsor B."/>
            <person name="Wolfe K.H."/>
            <person name="Zollner A."/>
            <person name="Zumstein E."/>
            <person name="Kleine K."/>
        </authorList>
    </citation>
    <scope>NUCLEOTIDE SEQUENCE [LARGE SCALE GENOMIC DNA]</scope>
    <source>
        <strain>ATCC 204508 / S288c</strain>
    </source>
</reference>
<reference key="2">
    <citation type="journal article" date="2014" name="G3 (Bethesda)">
        <title>The reference genome sequence of Saccharomyces cerevisiae: Then and now.</title>
        <authorList>
            <person name="Engel S.R."/>
            <person name="Dietrich F.S."/>
            <person name="Fisk D.G."/>
            <person name="Binkley G."/>
            <person name="Balakrishnan R."/>
            <person name="Costanzo M.C."/>
            <person name="Dwight S.S."/>
            <person name="Hitz B.C."/>
            <person name="Karra K."/>
            <person name="Nash R.S."/>
            <person name="Weng S."/>
            <person name="Wong E.D."/>
            <person name="Lloyd P."/>
            <person name="Skrzypek M.S."/>
            <person name="Miyasato S.R."/>
            <person name="Simison M."/>
            <person name="Cherry J.M."/>
        </authorList>
    </citation>
    <scope>GENOME REANNOTATION</scope>
    <source>
        <strain>ATCC 204508 / S288c</strain>
    </source>
</reference>
<reference key="3">
    <citation type="journal article" date="2003" name="Nature">
        <title>Global analysis of protein localization in budding yeast.</title>
        <authorList>
            <person name="Huh W.-K."/>
            <person name="Falvo J.V."/>
            <person name="Gerke L.C."/>
            <person name="Carroll A.S."/>
            <person name="Howson R.W."/>
            <person name="Weissman J.S."/>
            <person name="O'Shea E.K."/>
        </authorList>
    </citation>
    <scope>SUBCELLULAR LOCATION [LARGE SCALE ANALYSIS]</scope>
</reference>
<reference key="4">
    <citation type="journal article" date="2003" name="Nature">
        <title>Global analysis of protein expression in yeast.</title>
        <authorList>
            <person name="Ghaemmaghami S."/>
            <person name="Huh W.-K."/>
            <person name="Bower K."/>
            <person name="Howson R.W."/>
            <person name="Belle A."/>
            <person name="Dephoure N."/>
            <person name="O'Shea E.K."/>
            <person name="Weissman J.S."/>
        </authorList>
    </citation>
    <scope>LEVEL OF PROTEIN EXPRESSION [LARGE SCALE ANALYSIS]</scope>
</reference>
<reference key="5">
    <citation type="journal article" date="2006" name="J. Proteome Res.">
        <title>Toward the complete yeast mitochondrial proteome: multidimensional separation techniques for mitochondrial proteomics.</title>
        <authorList>
            <person name="Reinders J."/>
            <person name="Zahedi R.P."/>
            <person name="Pfanner N."/>
            <person name="Meisinger C."/>
            <person name="Sickmann A."/>
        </authorList>
    </citation>
    <scope>SUBCELLULAR LOCATION [LARGE SCALE ANALYSIS]</scope>
    <scope>IDENTIFICATION BY MASS SPECTROMETRY</scope>
</reference>
<gene>
    <name type="ordered locus">YOR022C</name>
    <name type="ORF">OR26.12</name>
</gene>
<proteinExistence type="evidence at protein level"/>
<accession>Q12204</accession>
<accession>D6W289</accession>